<organism>
    <name type="scientific">Campylobacter jejuni subsp. jejuni serotype O:2 (strain ATCC 700819 / NCTC 11168)</name>
    <dbReference type="NCBI Taxonomy" id="192222"/>
    <lineage>
        <taxon>Bacteria</taxon>
        <taxon>Pseudomonadati</taxon>
        <taxon>Campylobacterota</taxon>
        <taxon>Epsilonproteobacteria</taxon>
        <taxon>Campylobacterales</taxon>
        <taxon>Campylobacteraceae</taxon>
        <taxon>Campylobacter</taxon>
    </lineage>
</organism>
<gene>
    <name evidence="1" type="primary">prs</name>
    <name type="synonym">prsA</name>
    <name type="ordered locus">Cj0918c</name>
</gene>
<evidence type="ECO:0000255" key="1">
    <source>
        <dbReference type="HAMAP-Rule" id="MF_00583"/>
    </source>
</evidence>
<proteinExistence type="inferred from homology"/>
<sequence length="309" mass="33698">MRGYKIFSGSANVEFARQVSKYLSLPLSDAGVKRFSDGEISVQIDESVRGKDVFIIQSTCAPTNDNLMELLILTDALRRSSANSITAIIPYFGYARQDRKANPRVPITAKLVANLIQAAGIDRVATIDLHAGQIQGFFDIPVDNLYGSIVFNDYIKAKHFKNAIIGSPDIGGVARARSVAKHLGLDIVIVDKRREKANESEVMNIIGDVKDKEVILVDDIIDTAGTIVKAAEALKEKGAKSVMACCTHAVLSGKAYERIASGVLDELVVTDTIPLKEQLPNIKVLSVTPVFAEVIRRVYHNESVNSLFI</sequence>
<reference key="1">
    <citation type="journal article" date="2000" name="Nature">
        <title>The genome sequence of the food-borne pathogen Campylobacter jejuni reveals hypervariable sequences.</title>
        <authorList>
            <person name="Parkhill J."/>
            <person name="Wren B.W."/>
            <person name="Mungall K.L."/>
            <person name="Ketley J.M."/>
            <person name="Churcher C.M."/>
            <person name="Basham D."/>
            <person name="Chillingworth T."/>
            <person name="Davies R.M."/>
            <person name="Feltwell T."/>
            <person name="Holroyd S."/>
            <person name="Jagels K."/>
            <person name="Karlyshev A.V."/>
            <person name="Moule S."/>
            <person name="Pallen M.J."/>
            <person name="Penn C.W."/>
            <person name="Quail M.A."/>
            <person name="Rajandream M.A."/>
            <person name="Rutherford K.M."/>
            <person name="van Vliet A.H.M."/>
            <person name="Whitehead S."/>
            <person name="Barrell B.G."/>
        </authorList>
    </citation>
    <scope>NUCLEOTIDE SEQUENCE [LARGE SCALE GENOMIC DNA]</scope>
    <source>
        <strain>ATCC 700819 / NCTC 11168</strain>
    </source>
</reference>
<protein>
    <recommendedName>
        <fullName evidence="1">Ribose-phosphate pyrophosphokinase</fullName>
        <shortName evidence="1">RPPK</shortName>
        <ecNumber evidence="1">2.7.6.1</ecNumber>
    </recommendedName>
    <alternativeName>
        <fullName evidence="1">5-phospho-D-ribosyl alpha-1-diphosphate synthase</fullName>
    </alternativeName>
    <alternativeName>
        <fullName evidence="1">Phosphoribosyl diphosphate synthase</fullName>
    </alternativeName>
    <alternativeName>
        <fullName evidence="1">Phosphoribosyl pyrophosphate synthase</fullName>
        <shortName evidence="1">P-Rib-PP synthase</shortName>
        <shortName evidence="1">PRPP synthase</shortName>
        <shortName evidence="1">PRPPase</shortName>
    </alternativeName>
</protein>
<comment type="function">
    <text evidence="1">Involved in the biosynthesis of the central metabolite phospho-alpha-D-ribosyl-1-pyrophosphate (PRPP) via the transfer of pyrophosphoryl group from ATP to 1-hydroxyl of ribose-5-phosphate (Rib-5-P).</text>
</comment>
<comment type="catalytic activity">
    <reaction evidence="1">
        <text>D-ribose 5-phosphate + ATP = 5-phospho-alpha-D-ribose 1-diphosphate + AMP + H(+)</text>
        <dbReference type="Rhea" id="RHEA:15609"/>
        <dbReference type="ChEBI" id="CHEBI:15378"/>
        <dbReference type="ChEBI" id="CHEBI:30616"/>
        <dbReference type="ChEBI" id="CHEBI:58017"/>
        <dbReference type="ChEBI" id="CHEBI:78346"/>
        <dbReference type="ChEBI" id="CHEBI:456215"/>
        <dbReference type="EC" id="2.7.6.1"/>
    </reaction>
</comment>
<comment type="cofactor">
    <cofactor evidence="1">
        <name>Mg(2+)</name>
        <dbReference type="ChEBI" id="CHEBI:18420"/>
    </cofactor>
    <text evidence="1">Binds 2 Mg(2+) ions per subunit.</text>
</comment>
<comment type="pathway">
    <text evidence="1">Metabolic intermediate biosynthesis; 5-phospho-alpha-D-ribose 1-diphosphate biosynthesis; 5-phospho-alpha-D-ribose 1-diphosphate from D-ribose 5-phosphate (route I): step 1/1.</text>
</comment>
<comment type="subunit">
    <text evidence="1">Homohexamer.</text>
</comment>
<comment type="subcellular location">
    <subcellularLocation>
        <location evidence="1">Cytoplasm</location>
    </subcellularLocation>
</comment>
<comment type="similarity">
    <text evidence="1">Belongs to the ribose-phosphate pyrophosphokinase family. Class I subfamily.</text>
</comment>
<feature type="chain" id="PRO_0000141121" description="Ribose-phosphate pyrophosphokinase">
    <location>
        <begin position="1"/>
        <end position="309"/>
    </location>
</feature>
<feature type="active site" evidence="1">
    <location>
        <position position="192"/>
    </location>
</feature>
<feature type="binding site" evidence="1">
    <location>
        <begin position="37"/>
        <end position="39"/>
    </location>
    <ligand>
        <name>ATP</name>
        <dbReference type="ChEBI" id="CHEBI:30616"/>
    </ligand>
</feature>
<feature type="binding site" evidence="1">
    <location>
        <begin position="96"/>
        <end position="97"/>
    </location>
    <ligand>
        <name>ATP</name>
        <dbReference type="ChEBI" id="CHEBI:30616"/>
    </ligand>
</feature>
<feature type="binding site" evidence="1">
    <location>
        <position position="130"/>
    </location>
    <ligand>
        <name>Mg(2+)</name>
        <dbReference type="ChEBI" id="CHEBI:18420"/>
        <label>1</label>
    </ligand>
</feature>
<feature type="binding site" evidence="1">
    <location>
        <position position="169"/>
    </location>
    <ligand>
        <name>Mg(2+)</name>
        <dbReference type="ChEBI" id="CHEBI:18420"/>
        <label>2</label>
    </ligand>
</feature>
<feature type="binding site" evidence="1">
    <location>
        <position position="194"/>
    </location>
    <ligand>
        <name>D-ribose 5-phosphate</name>
        <dbReference type="ChEBI" id="CHEBI:78346"/>
    </ligand>
</feature>
<feature type="binding site" evidence="1">
    <location>
        <position position="218"/>
    </location>
    <ligand>
        <name>D-ribose 5-phosphate</name>
        <dbReference type="ChEBI" id="CHEBI:78346"/>
    </ligand>
</feature>
<feature type="binding site" evidence="1">
    <location>
        <begin position="222"/>
        <end position="226"/>
    </location>
    <ligand>
        <name>D-ribose 5-phosphate</name>
        <dbReference type="ChEBI" id="CHEBI:78346"/>
    </ligand>
</feature>
<accession>Q9PP15</accession>
<accession>Q0P9Y1</accession>
<dbReference type="EC" id="2.7.6.1" evidence="1"/>
<dbReference type="EMBL" id="AL111168">
    <property type="protein sequence ID" value="CAL35038.1"/>
    <property type="molecule type" value="Genomic_DNA"/>
</dbReference>
<dbReference type="PIR" id="E81365">
    <property type="entry name" value="E81365"/>
</dbReference>
<dbReference type="RefSeq" id="WP_002853293.1">
    <property type="nucleotide sequence ID" value="NZ_SZUC01000001.1"/>
</dbReference>
<dbReference type="RefSeq" id="YP_002344316.1">
    <property type="nucleotide sequence ID" value="NC_002163.1"/>
</dbReference>
<dbReference type="SMR" id="Q9PP15"/>
<dbReference type="IntAct" id="Q9PP15">
    <property type="interactions" value="78"/>
</dbReference>
<dbReference type="STRING" id="192222.Cj0918c"/>
<dbReference type="PaxDb" id="192222-Cj0918c"/>
<dbReference type="EnsemblBacteria" id="CAL35038">
    <property type="protein sequence ID" value="CAL35038"/>
    <property type="gene ID" value="Cj0918c"/>
</dbReference>
<dbReference type="GeneID" id="905217"/>
<dbReference type="KEGG" id="cje:Cj0918c"/>
<dbReference type="PATRIC" id="fig|192222.6.peg.902"/>
<dbReference type="eggNOG" id="COG0462">
    <property type="taxonomic scope" value="Bacteria"/>
</dbReference>
<dbReference type="HOGENOM" id="CLU_033546_4_0_7"/>
<dbReference type="OrthoDB" id="9777067at2"/>
<dbReference type="UniPathway" id="UPA00087">
    <property type="reaction ID" value="UER00172"/>
</dbReference>
<dbReference type="Proteomes" id="UP000000799">
    <property type="component" value="Chromosome"/>
</dbReference>
<dbReference type="GO" id="GO:0005737">
    <property type="term" value="C:cytoplasm"/>
    <property type="evidence" value="ECO:0007669"/>
    <property type="project" value="UniProtKB-SubCell"/>
</dbReference>
<dbReference type="GO" id="GO:0002189">
    <property type="term" value="C:ribose phosphate diphosphokinase complex"/>
    <property type="evidence" value="ECO:0007669"/>
    <property type="project" value="TreeGrafter"/>
</dbReference>
<dbReference type="GO" id="GO:0005524">
    <property type="term" value="F:ATP binding"/>
    <property type="evidence" value="ECO:0007669"/>
    <property type="project" value="UniProtKB-KW"/>
</dbReference>
<dbReference type="GO" id="GO:0016301">
    <property type="term" value="F:kinase activity"/>
    <property type="evidence" value="ECO:0007669"/>
    <property type="project" value="UniProtKB-KW"/>
</dbReference>
<dbReference type="GO" id="GO:0000287">
    <property type="term" value="F:magnesium ion binding"/>
    <property type="evidence" value="ECO:0007669"/>
    <property type="project" value="UniProtKB-UniRule"/>
</dbReference>
<dbReference type="GO" id="GO:0004749">
    <property type="term" value="F:ribose phosphate diphosphokinase activity"/>
    <property type="evidence" value="ECO:0007669"/>
    <property type="project" value="UniProtKB-UniRule"/>
</dbReference>
<dbReference type="GO" id="GO:0006015">
    <property type="term" value="P:5-phosphoribose 1-diphosphate biosynthetic process"/>
    <property type="evidence" value="ECO:0007669"/>
    <property type="project" value="UniProtKB-UniRule"/>
</dbReference>
<dbReference type="GO" id="GO:0006164">
    <property type="term" value="P:purine nucleotide biosynthetic process"/>
    <property type="evidence" value="ECO:0007669"/>
    <property type="project" value="TreeGrafter"/>
</dbReference>
<dbReference type="GO" id="GO:0009156">
    <property type="term" value="P:ribonucleoside monophosphate biosynthetic process"/>
    <property type="evidence" value="ECO:0007669"/>
    <property type="project" value="InterPro"/>
</dbReference>
<dbReference type="CDD" id="cd06223">
    <property type="entry name" value="PRTases_typeI"/>
    <property type="match status" value="1"/>
</dbReference>
<dbReference type="FunFam" id="3.40.50.2020:FF:000001">
    <property type="entry name" value="Ribose-phosphate pyrophosphokinase"/>
    <property type="match status" value="1"/>
</dbReference>
<dbReference type="Gene3D" id="3.40.50.2020">
    <property type="match status" value="2"/>
</dbReference>
<dbReference type="HAMAP" id="MF_00583_B">
    <property type="entry name" value="RibP_PPkinase_B"/>
    <property type="match status" value="1"/>
</dbReference>
<dbReference type="InterPro" id="IPR000842">
    <property type="entry name" value="PRib_PP_synth_CS"/>
</dbReference>
<dbReference type="InterPro" id="IPR029099">
    <property type="entry name" value="Pribosyltran_N"/>
</dbReference>
<dbReference type="InterPro" id="IPR000836">
    <property type="entry name" value="PRibTrfase_dom"/>
</dbReference>
<dbReference type="InterPro" id="IPR029057">
    <property type="entry name" value="PRTase-like"/>
</dbReference>
<dbReference type="InterPro" id="IPR005946">
    <property type="entry name" value="Rib-P_diPkinase"/>
</dbReference>
<dbReference type="InterPro" id="IPR037515">
    <property type="entry name" value="Rib-P_diPkinase_bac"/>
</dbReference>
<dbReference type="NCBIfam" id="NF002320">
    <property type="entry name" value="PRK01259.1"/>
    <property type="match status" value="1"/>
</dbReference>
<dbReference type="NCBIfam" id="TIGR01251">
    <property type="entry name" value="ribP_PPkin"/>
    <property type="match status" value="1"/>
</dbReference>
<dbReference type="PANTHER" id="PTHR10210">
    <property type="entry name" value="RIBOSE-PHOSPHATE DIPHOSPHOKINASE FAMILY MEMBER"/>
    <property type="match status" value="1"/>
</dbReference>
<dbReference type="PANTHER" id="PTHR10210:SF41">
    <property type="entry name" value="RIBOSE-PHOSPHATE PYROPHOSPHOKINASE 1, CHLOROPLASTIC"/>
    <property type="match status" value="1"/>
</dbReference>
<dbReference type="Pfam" id="PF14572">
    <property type="entry name" value="Pribosyl_synth"/>
    <property type="match status" value="1"/>
</dbReference>
<dbReference type="Pfam" id="PF13793">
    <property type="entry name" value="Pribosyltran_N"/>
    <property type="match status" value="1"/>
</dbReference>
<dbReference type="SMART" id="SM01400">
    <property type="entry name" value="Pribosyltran_N"/>
    <property type="match status" value="1"/>
</dbReference>
<dbReference type="SUPFAM" id="SSF53271">
    <property type="entry name" value="PRTase-like"/>
    <property type="match status" value="1"/>
</dbReference>
<dbReference type="PROSITE" id="PS00114">
    <property type="entry name" value="PRPP_SYNTHASE"/>
    <property type="match status" value="1"/>
</dbReference>
<name>KPRS_CAMJE</name>
<keyword id="KW-0067">ATP-binding</keyword>
<keyword id="KW-0963">Cytoplasm</keyword>
<keyword id="KW-0418">Kinase</keyword>
<keyword id="KW-0460">Magnesium</keyword>
<keyword id="KW-0479">Metal-binding</keyword>
<keyword id="KW-0545">Nucleotide biosynthesis</keyword>
<keyword id="KW-0547">Nucleotide-binding</keyword>
<keyword id="KW-1185">Reference proteome</keyword>
<keyword id="KW-0808">Transferase</keyword>